<organism>
    <name type="scientific">Protochlamydia amoebophila (strain UWE25)</name>
    <dbReference type="NCBI Taxonomy" id="264201"/>
    <lineage>
        <taxon>Bacteria</taxon>
        <taxon>Pseudomonadati</taxon>
        <taxon>Chlamydiota</taxon>
        <taxon>Chlamydiia</taxon>
        <taxon>Parachlamydiales</taxon>
        <taxon>Parachlamydiaceae</taxon>
        <taxon>Candidatus Protochlamydia</taxon>
    </lineage>
</organism>
<protein>
    <recommendedName>
        <fullName evidence="1">ATP synthase subunit alpha</fullName>
        <ecNumber evidence="1">7.1.2.2</ecNumber>
    </recommendedName>
    <alternativeName>
        <fullName evidence="1">ATP synthase F1 sector subunit alpha</fullName>
    </alternativeName>
    <alternativeName>
        <fullName evidence="1">F-ATPase subunit alpha</fullName>
    </alternativeName>
</protein>
<keyword id="KW-0066">ATP synthesis</keyword>
<keyword id="KW-0067">ATP-binding</keyword>
<keyword id="KW-1003">Cell membrane</keyword>
<keyword id="KW-0139">CF(1)</keyword>
<keyword id="KW-0375">Hydrogen ion transport</keyword>
<keyword id="KW-0406">Ion transport</keyword>
<keyword id="KW-0472">Membrane</keyword>
<keyword id="KW-0547">Nucleotide-binding</keyword>
<keyword id="KW-1185">Reference proteome</keyword>
<keyword id="KW-1278">Translocase</keyword>
<keyword id="KW-0813">Transport</keyword>
<name>ATPA_PARUW</name>
<proteinExistence type="inferred from homology"/>
<reference key="1">
    <citation type="journal article" date="2004" name="Science">
        <title>Illuminating the evolutionary history of chlamydiae.</title>
        <authorList>
            <person name="Horn M."/>
            <person name="Collingro A."/>
            <person name="Schmitz-Esser S."/>
            <person name="Beier C.L."/>
            <person name="Purkhold U."/>
            <person name="Fartmann B."/>
            <person name="Brandt P."/>
            <person name="Nyakatura G.J."/>
            <person name="Droege M."/>
            <person name="Frishman D."/>
            <person name="Rattei T."/>
            <person name="Mewes H.-W."/>
            <person name="Wagner M."/>
        </authorList>
    </citation>
    <scope>NUCLEOTIDE SEQUENCE [LARGE SCALE GENOMIC DNA]</scope>
    <source>
        <strain>UWE25</strain>
    </source>
</reference>
<gene>
    <name evidence="1" type="primary">atpA</name>
    <name type="ordered locus">pc1670</name>
</gene>
<accession>Q6MAK5</accession>
<comment type="function">
    <text evidence="1">Produces ATP from ADP in the presence of a proton gradient across the membrane. The alpha chain is a regulatory subunit.</text>
</comment>
<comment type="catalytic activity">
    <reaction evidence="1">
        <text>ATP + H2O + 4 H(+)(in) = ADP + phosphate + 5 H(+)(out)</text>
        <dbReference type="Rhea" id="RHEA:57720"/>
        <dbReference type="ChEBI" id="CHEBI:15377"/>
        <dbReference type="ChEBI" id="CHEBI:15378"/>
        <dbReference type="ChEBI" id="CHEBI:30616"/>
        <dbReference type="ChEBI" id="CHEBI:43474"/>
        <dbReference type="ChEBI" id="CHEBI:456216"/>
        <dbReference type="EC" id="7.1.2.2"/>
    </reaction>
</comment>
<comment type="subunit">
    <text evidence="1">F-type ATPases have 2 components, CF(1) - the catalytic core - and CF(0) - the membrane proton channel. CF(1) has five subunits: alpha(3), beta(3), gamma(1), delta(1), epsilon(1). CF(0) has three main subunits: a(1), b(2) and c(9-12). The alpha and beta chains form an alternating ring which encloses part of the gamma chain. CF(1) is attached to CF(0) by a central stalk formed by the gamma and epsilon chains, while a peripheral stalk is formed by the delta and b chains.</text>
</comment>
<comment type="subcellular location">
    <subcellularLocation>
        <location evidence="1">Cell membrane</location>
        <topology evidence="1">Peripheral membrane protein</topology>
    </subcellularLocation>
</comment>
<comment type="similarity">
    <text evidence="1">Belongs to the ATPase alpha/beta chains family.</text>
</comment>
<dbReference type="EC" id="7.1.2.2" evidence="1"/>
<dbReference type="EMBL" id="BX908798">
    <property type="protein sequence ID" value="CAF24394.1"/>
    <property type="molecule type" value="Genomic_DNA"/>
</dbReference>
<dbReference type="RefSeq" id="WP_011176216.1">
    <property type="nucleotide sequence ID" value="NC_005861.2"/>
</dbReference>
<dbReference type="SMR" id="Q6MAK5"/>
<dbReference type="STRING" id="264201.pc1670"/>
<dbReference type="KEGG" id="pcu:PC_RS07985"/>
<dbReference type="eggNOG" id="COG0056">
    <property type="taxonomic scope" value="Bacteria"/>
</dbReference>
<dbReference type="HOGENOM" id="CLU_010091_2_1_0"/>
<dbReference type="OrthoDB" id="9803053at2"/>
<dbReference type="Proteomes" id="UP000000529">
    <property type="component" value="Chromosome"/>
</dbReference>
<dbReference type="GO" id="GO:0005886">
    <property type="term" value="C:plasma membrane"/>
    <property type="evidence" value="ECO:0007669"/>
    <property type="project" value="UniProtKB-SubCell"/>
</dbReference>
<dbReference type="GO" id="GO:0045259">
    <property type="term" value="C:proton-transporting ATP synthase complex"/>
    <property type="evidence" value="ECO:0007669"/>
    <property type="project" value="UniProtKB-KW"/>
</dbReference>
<dbReference type="GO" id="GO:0043531">
    <property type="term" value="F:ADP binding"/>
    <property type="evidence" value="ECO:0007669"/>
    <property type="project" value="TreeGrafter"/>
</dbReference>
<dbReference type="GO" id="GO:0005524">
    <property type="term" value="F:ATP binding"/>
    <property type="evidence" value="ECO:0007669"/>
    <property type="project" value="UniProtKB-UniRule"/>
</dbReference>
<dbReference type="GO" id="GO:0046933">
    <property type="term" value="F:proton-transporting ATP synthase activity, rotational mechanism"/>
    <property type="evidence" value="ECO:0007669"/>
    <property type="project" value="UniProtKB-UniRule"/>
</dbReference>
<dbReference type="CDD" id="cd18113">
    <property type="entry name" value="ATP-synt_F1_alpha_C"/>
    <property type="match status" value="1"/>
</dbReference>
<dbReference type="CDD" id="cd18116">
    <property type="entry name" value="ATP-synt_F1_alpha_N"/>
    <property type="match status" value="1"/>
</dbReference>
<dbReference type="CDD" id="cd01132">
    <property type="entry name" value="F1-ATPase_alpha_CD"/>
    <property type="match status" value="1"/>
</dbReference>
<dbReference type="FunFam" id="1.20.150.20:FF:000001">
    <property type="entry name" value="ATP synthase subunit alpha"/>
    <property type="match status" value="1"/>
</dbReference>
<dbReference type="FunFam" id="2.40.30.20:FF:000001">
    <property type="entry name" value="ATP synthase subunit alpha"/>
    <property type="match status" value="1"/>
</dbReference>
<dbReference type="FunFam" id="3.40.50.300:FF:000002">
    <property type="entry name" value="ATP synthase subunit alpha"/>
    <property type="match status" value="1"/>
</dbReference>
<dbReference type="Gene3D" id="2.40.30.20">
    <property type="match status" value="1"/>
</dbReference>
<dbReference type="Gene3D" id="1.20.150.20">
    <property type="entry name" value="ATP synthase alpha/beta chain, C-terminal domain"/>
    <property type="match status" value="1"/>
</dbReference>
<dbReference type="Gene3D" id="3.40.50.300">
    <property type="entry name" value="P-loop containing nucleotide triphosphate hydrolases"/>
    <property type="match status" value="1"/>
</dbReference>
<dbReference type="HAMAP" id="MF_01346">
    <property type="entry name" value="ATP_synth_alpha_bact"/>
    <property type="match status" value="1"/>
</dbReference>
<dbReference type="InterPro" id="IPR023366">
    <property type="entry name" value="ATP_synth_asu-like_sf"/>
</dbReference>
<dbReference type="InterPro" id="IPR000793">
    <property type="entry name" value="ATP_synth_asu_C"/>
</dbReference>
<dbReference type="InterPro" id="IPR038376">
    <property type="entry name" value="ATP_synth_asu_C_sf"/>
</dbReference>
<dbReference type="InterPro" id="IPR033732">
    <property type="entry name" value="ATP_synth_F1_a_nt-bd_dom"/>
</dbReference>
<dbReference type="InterPro" id="IPR005294">
    <property type="entry name" value="ATP_synth_F1_asu"/>
</dbReference>
<dbReference type="InterPro" id="IPR020003">
    <property type="entry name" value="ATPase_a/bsu_AS"/>
</dbReference>
<dbReference type="InterPro" id="IPR004100">
    <property type="entry name" value="ATPase_F1/V1/A1_a/bsu_N"/>
</dbReference>
<dbReference type="InterPro" id="IPR036121">
    <property type="entry name" value="ATPase_F1/V1/A1_a/bsu_N_sf"/>
</dbReference>
<dbReference type="InterPro" id="IPR000194">
    <property type="entry name" value="ATPase_F1/V1/A1_a/bsu_nucl-bd"/>
</dbReference>
<dbReference type="InterPro" id="IPR027417">
    <property type="entry name" value="P-loop_NTPase"/>
</dbReference>
<dbReference type="NCBIfam" id="TIGR00962">
    <property type="entry name" value="atpA"/>
    <property type="match status" value="1"/>
</dbReference>
<dbReference type="NCBIfam" id="NF009884">
    <property type="entry name" value="PRK13343.1"/>
    <property type="match status" value="1"/>
</dbReference>
<dbReference type="PANTHER" id="PTHR48082">
    <property type="entry name" value="ATP SYNTHASE SUBUNIT ALPHA, MITOCHONDRIAL"/>
    <property type="match status" value="1"/>
</dbReference>
<dbReference type="PANTHER" id="PTHR48082:SF2">
    <property type="entry name" value="ATP SYNTHASE SUBUNIT ALPHA, MITOCHONDRIAL"/>
    <property type="match status" value="1"/>
</dbReference>
<dbReference type="Pfam" id="PF00006">
    <property type="entry name" value="ATP-synt_ab"/>
    <property type="match status" value="1"/>
</dbReference>
<dbReference type="Pfam" id="PF00306">
    <property type="entry name" value="ATP-synt_ab_C"/>
    <property type="match status" value="1"/>
</dbReference>
<dbReference type="Pfam" id="PF02874">
    <property type="entry name" value="ATP-synt_ab_N"/>
    <property type="match status" value="1"/>
</dbReference>
<dbReference type="PIRSF" id="PIRSF039088">
    <property type="entry name" value="F_ATPase_subunit_alpha"/>
    <property type="match status" value="1"/>
</dbReference>
<dbReference type="SUPFAM" id="SSF47917">
    <property type="entry name" value="C-terminal domain of alpha and beta subunits of F1 ATP synthase"/>
    <property type="match status" value="1"/>
</dbReference>
<dbReference type="SUPFAM" id="SSF50615">
    <property type="entry name" value="N-terminal domain of alpha and beta subunits of F1 ATP synthase"/>
    <property type="match status" value="1"/>
</dbReference>
<dbReference type="SUPFAM" id="SSF52540">
    <property type="entry name" value="P-loop containing nucleoside triphosphate hydrolases"/>
    <property type="match status" value="1"/>
</dbReference>
<dbReference type="PROSITE" id="PS00152">
    <property type="entry name" value="ATPASE_ALPHA_BETA"/>
    <property type="match status" value="1"/>
</dbReference>
<evidence type="ECO:0000255" key="1">
    <source>
        <dbReference type="HAMAP-Rule" id="MF_01346"/>
    </source>
</evidence>
<feature type="chain" id="PRO_0000238311" description="ATP synthase subunit alpha">
    <location>
        <begin position="1"/>
        <end position="508"/>
    </location>
</feature>
<feature type="binding site" evidence="1">
    <location>
        <begin position="171"/>
        <end position="178"/>
    </location>
    <ligand>
        <name>ATP</name>
        <dbReference type="ChEBI" id="CHEBI:30616"/>
    </ligand>
</feature>
<feature type="site" description="Required for activity" evidence="1">
    <location>
        <position position="364"/>
    </location>
</feature>
<sequence length="508" mass="56264">MRLNPEEVSWVIQQEIEKYHEDLSLKFESAGRVLYVGDGIARVWGLDDVMMSELVEFPDGTLGIVLNLEIDNVGVIILGSDRNIREQDIVKRTGKIASVPVGEGMLGRVINALGQPIDGKGAIETKEFRAIESSAPGVVQRKPVNEPVQTGIKAIDSMIPIGRGQRELIIGDRQTGKTTVILDTIINQKNTGVCCIYVAIGQKSSTIAQVVKILEEHDAMKYTIIVAATASDPAALQYVAPYSATALGEHFMYNGKHVICFYDDLSKHAQAYREIALLLRRPPGREAYPGDIFYLHSRLLERSAKLSTELGGGSLTAVPVIETQANDVTTYIPTNVISITDGQIYLESDLFYAGVRPAINVGISASRVGGKAQSKAMKKVAASLRLDLAQYRELAAFAQFGSEMDKTTQAQLVRGERMIEVLKQDKFKPISLSKQVMIIFTGTKGFLDDLPLPFIKNFENEFYLFMDENHPHISNSIEQSLDLDQKTMEQLNEAVTKFKSDFKLRYQI</sequence>